<keyword id="KW-0028">Amino-acid biosynthesis</keyword>
<keyword id="KW-0057">Aromatic amino acid biosynthesis</keyword>
<keyword id="KW-0456">Lyase</keyword>
<keyword id="KW-0822">Tryptophan biosynthesis</keyword>
<feature type="chain" id="PRO_1000018279" description="Tryptophan synthase alpha chain">
    <location>
        <begin position="1"/>
        <end position="273"/>
    </location>
</feature>
<feature type="active site" description="Proton acceptor" evidence="1">
    <location>
        <position position="56"/>
    </location>
</feature>
<feature type="active site" description="Proton acceptor" evidence="1">
    <location>
        <position position="67"/>
    </location>
</feature>
<dbReference type="EC" id="4.2.1.20" evidence="1"/>
<dbReference type="EMBL" id="CP000753">
    <property type="protein sequence ID" value="ABS08861.1"/>
    <property type="molecule type" value="Genomic_DNA"/>
</dbReference>
<dbReference type="RefSeq" id="WP_012089561.1">
    <property type="nucleotide sequence ID" value="NC_009665.1"/>
</dbReference>
<dbReference type="SMR" id="A6WPX2"/>
<dbReference type="KEGG" id="sbm:Shew185_2727"/>
<dbReference type="HOGENOM" id="CLU_016734_0_4_6"/>
<dbReference type="UniPathway" id="UPA00035">
    <property type="reaction ID" value="UER00044"/>
</dbReference>
<dbReference type="GO" id="GO:0005829">
    <property type="term" value="C:cytosol"/>
    <property type="evidence" value="ECO:0007669"/>
    <property type="project" value="TreeGrafter"/>
</dbReference>
<dbReference type="GO" id="GO:0004834">
    <property type="term" value="F:tryptophan synthase activity"/>
    <property type="evidence" value="ECO:0007669"/>
    <property type="project" value="UniProtKB-UniRule"/>
</dbReference>
<dbReference type="CDD" id="cd04724">
    <property type="entry name" value="Tryptophan_synthase_alpha"/>
    <property type="match status" value="1"/>
</dbReference>
<dbReference type="FunFam" id="3.20.20.70:FF:000037">
    <property type="entry name" value="Tryptophan synthase alpha chain"/>
    <property type="match status" value="1"/>
</dbReference>
<dbReference type="Gene3D" id="3.20.20.70">
    <property type="entry name" value="Aldolase class I"/>
    <property type="match status" value="1"/>
</dbReference>
<dbReference type="HAMAP" id="MF_00131">
    <property type="entry name" value="Trp_synth_alpha"/>
    <property type="match status" value="1"/>
</dbReference>
<dbReference type="InterPro" id="IPR013785">
    <property type="entry name" value="Aldolase_TIM"/>
</dbReference>
<dbReference type="InterPro" id="IPR011060">
    <property type="entry name" value="RibuloseP-bd_barrel"/>
</dbReference>
<dbReference type="InterPro" id="IPR018204">
    <property type="entry name" value="Trp_synthase_alpha_AS"/>
</dbReference>
<dbReference type="InterPro" id="IPR002028">
    <property type="entry name" value="Trp_synthase_suA"/>
</dbReference>
<dbReference type="NCBIfam" id="TIGR00262">
    <property type="entry name" value="trpA"/>
    <property type="match status" value="1"/>
</dbReference>
<dbReference type="PANTHER" id="PTHR43406:SF1">
    <property type="entry name" value="TRYPTOPHAN SYNTHASE ALPHA CHAIN, CHLOROPLASTIC"/>
    <property type="match status" value="1"/>
</dbReference>
<dbReference type="PANTHER" id="PTHR43406">
    <property type="entry name" value="TRYPTOPHAN SYNTHASE, ALPHA CHAIN"/>
    <property type="match status" value="1"/>
</dbReference>
<dbReference type="Pfam" id="PF00290">
    <property type="entry name" value="Trp_syntA"/>
    <property type="match status" value="1"/>
</dbReference>
<dbReference type="SUPFAM" id="SSF51366">
    <property type="entry name" value="Ribulose-phoshate binding barrel"/>
    <property type="match status" value="1"/>
</dbReference>
<dbReference type="PROSITE" id="PS00167">
    <property type="entry name" value="TRP_SYNTHASE_ALPHA"/>
    <property type="match status" value="1"/>
</dbReference>
<organism>
    <name type="scientific">Shewanella baltica (strain OS185)</name>
    <dbReference type="NCBI Taxonomy" id="402882"/>
    <lineage>
        <taxon>Bacteria</taxon>
        <taxon>Pseudomonadati</taxon>
        <taxon>Pseudomonadota</taxon>
        <taxon>Gammaproteobacteria</taxon>
        <taxon>Alteromonadales</taxon>
        <taxon>Shewanellaceae</taxon>
        <taxon>Shewanella</taxon>
    </lineage>
</organism>
<name>TRPA_SHEB8</name>
<protein>
    <recommendedName>
        <fullName evidence="1">Tryptophan synthase alpha chain</fullName>
        <ecNumber evidence="1">4.2.1.20</ecNumber>
    </recommendedName>
</protein>
<accession>A6WPX2</accession>
<comment type="function">
    <text evidence="1">The alpha subunit is responsible for the aldol cleavage of indoleglycerol phosphate to indole and glyceraldehyde 3-phosphate.</text>
</comment>
<comment type="catalytic activity">
    <reaction evidence="1">
        <text>(1S,2R)-1-C-(indol-3-yl)glycerol 3-phosphate + L-serine = D-glyceraldehyde 3-phosphate + L-tryptophan + H2O</text>
        <dbReference type="Rhea" id="RHEA:10532"/>
        <dbReference type="ChEBI" id="CHEBI:15377"/>
        <dbReference type="ChEBI" id="CHEBI:33384"/>
        <dbReference type="ChEBI" id="CHEBI:57912"/>
        <dbReference type="ChEBI" id="CHEBI:58866"/>
        <dbReference type="ChEBI" id="CHEBI:59776"/>
        <dbReference type="EC" id="4.2.1.20"/>
    </reaction>
</comment>
<comment type="pathway">
    <text evidence="1">Amino-acid biosynthesis; L-tryptophan biosynthesis; L-tryptophan from chorismate: step 5/5.</text>
</comment>
<comment type="subunit">
    <text evidence="1">Tetramer of two alpha and two beta chains.</text>
</comment>
<comment type="similarity">
    <text evidence="1">Belongs to the TrpA family.</text>
</comment>
<proteinExistence type="inferred from homology"/>
<gene>
    <name evidence="1" type="primary">trpA</name>
    <name type="ordered locus">Shew185_2727</name>
</gene>
<sequence length="273" mass="28137">MSDTLTNTGRYQATFAKLKAEGRGAFVPFVTLGDPSPELSLKIIDTLVQNGADALELGFPFSDPLADGPVIQGANLRSLAAGTTPTACFELLAQVRAKYPELPIGLLLYANLVFANGIDAFYAKAQQAGVDSVLIADVPVEESAPFSEAAKAHGIAPIFIAPPNADSETLALVSASGEGYTYLLSRAGVTGTDTKAGVPVEEILSKLKTFNAPPPLLGFGIAEPAQVTAAIKAGAAGAISGSAVVKIIETHQHDEAKLLATLGDFTRAMKAAT</sequence>
<evidence type="ECO:0000255" key="1">
    <source>
        <dbReference type="HAMAP-Rule" id="MF_00131"/>
    </source>
</evidence>
<reference key="1">
    <citation type="submission" date="2007-07" db="EMBL/GenBank/DDBJ databases">
        <title>Complete sequence of chromosome of Shewanella baltica OS185.</title>
        <authorList>
            <consortium name="US DOE Joint Genome Institute"/>
            <person name="Copeland A."/>
            <person name="Lucas S."/>
            <person name="Lapidus A."/>
            <person name="Barry K."/>
            <person name="Glavina del Rio T."/>
            <person name="Dalin E."/>
            <person name="Tice H."/>
            <person name="Pitluck S."/>
            <person name="Sims D."/>
            <person name="Brettin T."/>
            <person name="Bruce D."/>
            <person name="Detter J.C."/>
            <person name="Han C."/>
            <person name="Schmutz J."/>
            <person name="Larimer F."/>
            <person name="Land M."/>
            <person name="Hauser L."/>
            <person name="Kyrpides N."/>
            <person name="Mikhailova N."/>
            <person name="Brettar I."/>
            <person name="Rodrigues J."/>
            <person name="Konstantinidis K."/>
            <person name="Tiedje J."/>
            <person name="Richardson P."/>
        </authorList>
    </citation>
    <scope>NUCLEOTIDE SEQUENCE [LARGE SCALE GENOMIC DNA]</scope>
    <source>
        <strain>OS185</strain>
    </source>
</reference>